<dbReference type="EMBL" id="CP000825">
    <property type="protein sequence ID" value="ABV51435.1"/>
    <property type="molecule type" value="Genomic_DNA"/>
</dbReference>
<dbReference type="RefSeq" id="WP_012008441.1">
    <property type="nucleotide sequence ID" value="NC_009840.1"/>
</dbReference>
<dbReference type="SMR" id="A8G754"/>
<dbReference type="STRING" id="93060.P9215_18221"/>
<dbReference type="KEGG" id="pmh:P9215_18221"/>
<dbReference type="eggNOG" id="COG0197">
    <property type="taxonomic scope" value="Bacteria"/>
</dbReference>
<dbReference type="HOGENOM" id="CLU_078858_2_1_3"/>
<dbReference type="OrthoDB" id="9802589at2"/>
<dbReference type="Proteomes" id="UP000002014">
    <property type="component" value="Chromosome"/>
</dbReference>
<dbReference type="GO" id="GO:1990904">
    <property type="term" value="C:ribonucleoprotein complex"/>
    <property type="evidence" value="ECO:0007669"/>
    <property type="project" value="UniProtKB-KW"/>
</dbReference>
<dbReference type="GO" id="GO:0005840">
    <property type="term" value="C:ribosome"/>
    <property type="evidence" value="ECO:0007669"/>
    <property type="project" value="UniProtKB-KW"/>
</dbReference>
<dbReference type="GO" id="GO:0019843">
    <property type="term" value="F:rRNA binding"/>
    <property type="evidence" value="ECO:0007669"/>
    <property type="project" value="UniProtKB-UniRule"/>
</dbReference>
<dbReference type="GO" id="GO:0003735">
    <property type="term" value="F:structural constituent of ribosome"/>
    <property type="evidence" value="ECO:0007669"/>
    <property type="project" value="InterPro"/>
</dbReference>
<dbReference type="GO" id="GO:0000049">
    <property type="term" value="F:tRNA binding"/>
    <property type="evidence" value="ECO:0007669"/>
    <property type="project" value="UniProtKB-KW"/>
</dbReference>
<dbReference type="GO" id="GO:0006412">
    <property type="term" value="P:translation"/>
    <property type="evidence" value="ECO:0007669"/>
    <property type="project" value="UniProtKB-UniRule"/>
</dbReference>
<dbReference type="CDD" id="cd01433">
    <property type="entry name" value="Ribosomal_L16_L10e"/>
    <property type="match status" value="1"/>
</dbReference>
<dbReference type="FunFam" id="3.90.1170.10:FF:000001">
    <property type="entry name" value="50S ribosomal protein L16"/>
    <property type="match status" value="1"/>
</dbReference>
<dbReference type="Gene3D" id="3.90.1170.10">
    <property type="entry name" value="Ribosomal protein L10e/L16"/>
    <property type="match status" value="1"/>
</dbReference>
<dbReference type="HAMAP" id="MF_01342">
    <property type="entry name" value="Ribosomal_uL16"/>
    <property type="match status" value="1"/>
</dbReference>
<dbReference type="InterPro" id="IPR047873">
    <property type="entry name" value="Ribosomal_uL16"/>
</dbReference>
<dbReference type="InterPro" id="IPR000114">
    <property type="entry name" value="Ribosomal_uL16_bact-type"/>
</dbReference>
<dbReference type="InterPro" id="IPR020798">
    <property type="entry name" value="Ribosomal_uL16_CS"/>
</dbReference>
<dbReference type="InterPro" id="IPR016180">
    <property type="entry name" value="Ribosomal_uL16_dom"/>
</dbReference>
<dbReference type="InterPro" id="IPR036920">
    <property type="entry name" value="Ribosomal_uL16_sf"/>
</dbReference>
<dbReference type="NCBIfam" id="TIGR01164">
    <property type="entry name" value="rplP_bact"/>
    <property type="match status" value="1"/>
</dbReference>
<dbReference type="PANTHER" id="PTHR12220">
    <property type="entry name" value="50S/60S RIBOSOMAL PROTEIN L16"/>
    <property type="match status" value="1"/>
</dbReference>
<dbReference type="PANTHER" id="PTHR12220:SF13">
    <property type="entry name" value="LARGE RIBOSOMAL SUBUNIT PROTEIN UL16M"/>
    <property type="match status" value="1"/>
</dbReference>
<dbReference type="Pfam" id="PF00252">
    <property type="entry name" value="Ribosomal_L16"/>
    <property type="match status" value="1"/>
</dbReference>
<dbReference type="PRINTS" id="PR00060">
    <property type="entry name" value="RIBOSOMALL16"/>
</dbReference>
<dbReference type="SUPFAM" id="SSF54686">
    <property type="entry name" value="Ribosomal protein L16p/L10e"/>
    <property type="match status" value="1"/>
</dbReference>
<dbReference type="PROSITE" id="PS00586">
    <property type="entry name" value="RIBOSOMAL_L16_1"/>
    <property type="match status" value="1"/>
</dbReference>
<dbReference type="PROSITE" id="PS00701">
    <property type="entry name" value="RIBOSOMAL_L16_2"/>
    <property type="match status" value="1"/>
</dbReference>
<gene>
    <name evidence="1" type="primary">rplP</name>
    <name evidence="1" type="synonym">rpl16</name>
    <name type="ordered locus">P9215_18221</name>
</gene>
<sequence>MLSPKRTKFRKQHRGRMRGVASKGNTIAFGQFALQAQDCGWVTARQIEASRRAMTRYIKRGGQIWIRIFPDKPVTMRPAETRMGSGKGNPEFWVAVVKPGRILFEMGGEDITEEVAKEAMRLAQYKLPVKTKFISIDKNLEAPSQEKTKNSKKSQEEVKQ</sequence>
<proteinExistence type="inferred from homology"/>
<evidence type="ECO:0000255" key="1">
    <source>
        <dbReference type="HAMAP-Rule" id="MF_01342"/>
    </source>
</evidence>
<evidence type="ECO:0000256" key="2">
    <source>
        <dbReference type="SAM" id="MobiDB-lite"/>
    </source>
</evidence>
<evidence type="ECO:0000305" key="3"/>
<comment type="function">
    <text evidence="1">Binds 23S rRNA and is also seen to make contacts with the A and possibly P site tRNAs.</text>
</comment>
<comment type="subunit">
    <text evidence="1">Part of the 50S ribosomal subunit.</text>
</comment>
<comment type="similarity">
    <text evidence="1">Belongs to the universal ribosomal protein uL16 family.</text>
</comment>
<organism>
    <name type="scientific">Prochlorococcus marinus (strain MIT 9215)</name>
    <dbReference type="NCBI Taxonomy" id="93060"/>
    <lineage>
        <taxon>Bacteria</taxon>
        <taxon>Bacillati</taxon>
        <taxon>Cyanobacteriota</taxon>
        <taxon>Cyanophyceae</taxon>
        <taxon>Synechococcales</taxon>
        <taxon>Prochlorococcaceae</taxon>
        <taxon>Prochlorococcus</taxon>
    </lineage>
</organism>
<reference key="1">
    <citation type="journal article" date="2007" name="PLoS Genet.">
        <title>Patterns and implications of gene gain and loss in the evolution of Prochlorococcus.</title>
        <authorList>
            <person name="Kettler G.C."/>
            <person name="Martiny A.C."/>
            <person name="Huang K."/>
            <person name="Zucker J."/>
            <person name="Coleman M.L."/>
            <person name="Rodrigue S."/>
            <person name="Chen F."/>
            <person name="Lapidus A."/>
            <person name="Ferriera S."/>
            <person name="Johnson J."/>
            <person name="Steglich C."/>
            <person name="Church G.M."/>
            <person name="Richardson P."/>
            <person name="Chisholm S.W."/>
        </authorList>
    </citation>
    <scope>NUCLEOTIDE SEQUENCE [LARGE SCALE GENOMIC DNA]</scope>
    <source>
        <strain>MIT 9215</strain>
    </source>
</reference>
<protein>
    <recommendedName>
        <fullName evidence="1">Large ribosomal subunit protein uL16</fullName>
    </recommendedName>
    <alternativeName>
        <fullName evidence="3">50S ribosomal protein L16</fullName>
    </alternativeName>
</protein>
<name>RL16_PROM2</name>
<keyword id="KW-0687">Ribonucleoprotein</keyword>
<keyword id="KW-0689">Ribosomal protein</keyword>
<keyword id="KW-0694">RNA-binding</keyword>
<keyword id="KW-0699">rRNA-binding</keyword>
<keyword id="KW-0820">tRNA-binding</keyword>
<accession>A8G754</accession>
<feature type="chain" id="PRO_1000067680" description="Large ribosomal subunit protein uL16">
    <location>
        <begin position="1"/>
        <end position="160"/>
    </location>
</feature>
<feature type="region of interest" description="Disordered" evidence="2">
    <location>
        <begin position="138"/>
        <end position="160"/>
    </location>
</feature>